<organism>
    <name type="scientific">Bartonella henselae (strain ATCC 49882 / DSM 28221 / CCUG 30454 / Houston 1)</name>
    <name type="common">Rochalimaea henselae</name>
    <dbReference type="NCBI Taxonomy" id="283166"/>
    <lineage>
        <taxon>Bacteria</taxon>
        <taxon>Pseudomonadati</taxon>
        <taxon>Pseudomonadota</taxon>
        <taxon>Alphaproteobacteria</taxon>
        <taxon>Hyphomicrobiales</taxon>
        <taxon>Bartonellaceae</taxon>
        <taxon>Bartonella</taxon>
    </lineage>
</organism>
<protein>
    <recommendedName>
        <fullName>Type IV secretion system protein virB10</fullName>
    </recommendedName>
</protein>
<comment type="function">
    <text evidence="4 6">The type IV secretion system VirB/VirD4 is a major virulence determinant for subversion of human endothelial cell (HEC) function. VirB-dependent changes of HEC include massive cytoskeletal rearrangements, a pro-inflammatory activation by nuclear factor NF-kappa-B, inhibition of early and late events of apoptosis, leading to an increased cell survival, and, at high infection doses, a cytostatic or cytotoxic effect, which interferes with a potent VirB-independent mitogenic activity. These changes of HEC require the T4S coupling protein VirD4 and at least one of the effector proteins BepA-G.</text>
</comment>
<comment type="subunit">
    <text evidence="5">Interacts with virB4, virB8 and virB9.</text>
</comment>
<comment type="subcellular location">
    <subcellularLocation>
        <location evidence="7">Cell inner membrane</location>
        <topology evidence="7">Single-pass membrane protein</topology>
    </subcellularLocation>
</comment>
<comment type="induction">
    <text evidence="3">During the interaction with the intracellular environment of host cells.</text>
</comment>
<comment type="similarity">
    <text evidence="7">Belongs to the TrbI/VirB10 family.</text>
</comment>
<comment type="sequence caution" evidence="7">
    <conflict type="frameshift">
        <sequence resource="EMBL-CDS" id="AAF00948"/>
    </conflict>
</comment>
<proteinExistence type="evidence at protein level"/>
<gene>
    <name type="primary">virB10</name>
    <name type="ordered locus">BH13340</name>
</gene>
<name>VIRBA_BARHE</name>
<accession>Q6G2B2</accession>
<accession>Q9RNC8</accession>
<keyword id="KW-0997">Cell inner membrane</keyword>
<keyword id="KW-1003">Cell membrane</keyword>
<keyword id="KW-0472">Membrane</keyword>
<keyword id="KW-0812">Transmembrane</keyword>
<keyword id="KW-1133">Transmembrane helix</keyword>
<keyword id="KW-0813">Transport</keyword>
<keyword id="KW-0843">Virulence</keyword>
<evidence type="ECO:0000255" key="1"/>
<evidence type="ECO:0000256" key="2">
    <source>
        <dbReference type="SAM" id="MobiDB-lite"/>
    </source>
</evidence>
<evidence type="ECO:0000269" key="3">
    <source>
    </source>
</evidence>
<evidence type="ECO:0000269" key="4">
    <source>
    </source>
</evidence>
<evidence type="ECO:0000269" key="5">
    <source>
    </source>
</evidence>
<evidence type="ECO:0000269" key="6">
    <source>
    </source>
</evidence>
<evidence type="ECO:0000305" key="7"/>
<feature type="chain" id="PRO_0000273532" description="Type IV secretion system protein virB10">
    <location>
        <begin position="1"/>
        <end position="396"/>
    </location>
</feature>
<feature type="transmembrane region" description="Helical" evidence="1">
    <location>
        <begin position="32"/>
        <end position="52"/>
    </location>
</feature>
<feature type="region of interest" description="Disordered" evidence="2">
    <location>
        <begin position="1"/>
        <end position="29"/>
    </location>
</feature>
<feature type="region of interest" description="Disordered" evidence="2">
    <location>
        <begin position="126"/>
        <end position="150"/>
    </location>
</feature>
<feature type="compositionally biased region" description="Basic and acidic residues" evidence="2">
    <location>
        <begin position="12"/>
        <end position="22"/>
    </location>
</feature>
<feature type="compositionally biased region" description="Polar residues" evidence="2">
    <location>
        <begin position="126"/>
        <end position="144"/>
    </location>
</feature>
<reference key="1">
    <citation type="journal article" date="2000" name="DNA Cell Biol.">
        <title>The gene encoding the 17-kDa antigen of Bartonella henselae is located within a cluster of genes homologous to the virB virulence operon.</title>
        <authorList>
            <person name="Padmalayam I."/>
            <person name="Karem K."/>
            <person name="Baumstark B.R."/>
            <person name="Massung R."/>
        </authorList>
    </citation>
    <scope>NUCLEOTIDE SEQUENCE [GENOMIC DNA]</scope>
    <source>
        <strain>ATCC 49882 / DSM 28221 / CCUG 30454 / Houston 1</strain>
    </source>
</reference>
<reference key="2">
    <citation type="journal article" date="2004" name="Proc. Natl. Acad. Sci. U.S.A.">
        <title>The louse-borne human pathogen Bartonella quintana is a genomic derivative of the zoonotic agent Bartonella henselae.</title>
        <authorList>
            <person name="Alsmark U.C.M."/>
            <person name="Frank A.C."/>
            <person name="Karlberg E.O."/>
            <person name="Legault B.-A."/>
            <person name="Ardell D.H."/>
            <person name="Canbaeck B."/>
            <person name="Eriksson A.-S."/>
            <person name="Naeslund A.K."/>
            <person name="Handley S.A."/>
            <person name="Huvet M."/>
            <person name="La Scola B."/>
            <person name="Holmberg M."/>
            <person name="Andersson S.G.E."/>
        </authorList>
    </citation>
    <scope>NUCLEOTIDE SEQUENCE [LARGE SCALE GENOMIC DNA]</scope>
    <source>
        <strain>ATCC 49882 / DSM 28221 / CCUG 30454 / Houston 1</strain>
    </source>
</reference>
<reference key="3">
    <citation type="journal article" date="2001" name="Infect. Immun.">
        <title>Intracellular induction of the Bartonella henselae virB operon by human endothelial cells.</title>
        <authorList>
            <person name="Schmiederer M."/>
            <person name="Arcenas R."/>
            <person name="Widen R."/>
            <person name="Valkov N."/>
            <person name="Anderson B.E."/>
        </authorList>
    </citation>
    <scope>INDUCTION</scope>
    <source>
        <strain>ATCC 49882 / DSM 28221 / CCUG 30454 / Houston 1</strain>
    </source>
</reference>
<reference key="4">
    <citation type="journal article" date="2004" name="J. Bacteriol.">
        <title>Interaction between protein subunits of the type IV secretion system of Bartonella henselae.</title>
        <authorList>
            <person name="Shamaei-Tousi A."/>
            <person name="Cahill R."/>
            <person name="Frankel G."/>
        </authorList>
    </citation>
    <scope>INTERACTION WITH VIRB4; VIRB8 AND VIRB9</scope>
</reference>
<reference key="5">
    <citation type="journal article" date="2004" name="Mol. Microbiol.">
        <title>The VirB type IV secretion system of Bartonella henselae mediates invasion, proinflammatory activation and antiapoptotic protection of endothelial cells.</title>
        <authorList>
            <person name="Schmid M.C."/>
            <person name="Schulein R."/>
            <person name="Dehio M."/>
            <person name="Denecker G."/>
            <person name="Carena I."/>
            <person name="Dehio C."/>
        </authorList>
    </citation>
    <scope>FUNCTION</scope>
    <source>
        <strain>ATCC 49882 / DSM 28221 / CCUG 30454 / Houston 1</strain>
    </source>
</reference>
<reference key="6">
    <citation type="journal article" date="2005" name="Proc. Natl. Acad. Sci. U.S.A.">
        <title>A bipartite signal mediates the transfer of type IV secretion substrates of Bartonella henselae into human cells.</title>
        <authorList>
            <person name="Schulein R."/>
            <person name="Guye P."/>
            <person name="Rhomberg T.A."/>
            <person name="Schmid M.C."/>
            <person name="Schroeder G."/>
            <person name="Vergunst A.C."/>
            <person name="Carena I."/>
            <person name="Dehio C."/>
        </authorList>
    </citation>
    <scope>FUNCTION</scope>
    <source>
        <strain>ATCC 49882 / DSM 28221 / CCUG 30454 / Houston 1</strain>
    </source>
</reference>
<dbReference type="EMBL" id="AF182718">
    <property type="protein sequence ID" value="AAF00948.1"/>
    <property type="status" value="ALT_FRAME"/>
    <property type="molecule type" value="Genomic_DNA"/>
</dbReference>
<dbReference type="EMBL" id="BX897699">
    <property type="protein sequence ID" value="CAF28107.1"/>
    <property type="molecule type" value="Genomic_DNA"/>
</dbReference>
<dbReference type="RefSeq" id="WP_011181135.1">
    <property type="nucleotide sequence ID" value="NC_005956.1"/>
</dbReference>
<dbReference type="SMR" id="Q6G2B2"/>
<dbReference type="IntAct" id="Q6G2B2">
    <property type="interactions" value="2"/>
</dbReference>
<dbReference type="PaxDb" id="283166-BH13340"/>
<dbReference type="EnsemblBacteria" id="CAF28107">
    <property type="protein sequence ID" value="CAF28107"/>
    <property type="gene ID" value="BH13340"/>
</dbReference>
<dbReference type="KEGG" id="bhe:BH13340"/>
<dbReference type="eggNOG" id="COG2948">
    <property type="taxonomic scope" value="Bacteria"/>
</dbReference>
<dbReference type="OrthoDB" id="9807354at2"/>
<dbReference type="Proteomes" id="UP000000421">
    <property type="component" value="Chromosome"/>
</dbReference>
<dbReference type="GO" id="GO:0005886">
    <property type="term" value="C:plasma membrane"/>
    <property type="evidence" value="ECO:0007669"/>
    <property type="project" value="UniProtKB-SubCell"/>
</dbReference>
<dbReference type="CDD" id="cd16429">
    <property type="entry name" value="VirB10"/>
    <property type="match status" value="1"/>
</dbReference>
<dbReference type="Gene3D" id="2.40.128.260">
    <property type="entry name" value="Type IV secretion system, VirB10/TraB/TrbI"/>
    <property type="match status" value="2"/>
</dbReference>
<dbReference type="InterPro" id="IPR047695">
    <property type="entry name" value="T4SS_VirB10/PtlG"/>
</dbReference>
<dbReference type="InterPro" id="IPR005498">
    <property type="entry name" value="T4SS_VirB10/TraB/TrbI"/>
</dbReference>
<dbReference type="InterPro" id="IPR042217">
    <property type="entry name" value="T4SS_VirB10/TrbI"/>
</dbReference>
<dbReference type="NCBIfam" id="NF038091">
    <property type="entry name" value="T4SS_VirB10"/>
    <property type="match status" value="1"/>
</dbReference>
<dbReference type="Pfam" id="PF03743">
    <property type="entry name" value="TrbI"/>
    <property type="match status" value="1"/>
</dbReference>
<sequence>MNDPMDENNLLNDRDMIKDGHGKKQRPNTSKAAALVILFGVCLYLAYSTLFTEKQQPVEVQKEGIIKQTELFRPAPPKPVSLEPTIEKNNVLLPKVELPTPPKKTTNSDDSLLEAAQRAPVLAYANTQKGQGSTEKNKDISANQPEAKPDETAQRFNHLLKPTTLEGIRAAKLGNRNYIIAMGASIPCILETAISSDQQGFASCIVSRDILSDNGRVVLLDKGTQIVGEYRAGLKKGQKRLFVLWNRAKTPNGIIITLASPATDALGRSGMDGDIDNHWLERIGSALLVSIVKDATNYVKGRLPKDQDKNNSETISSGQNIANIAVENYANIPPTLSKNQGEMVNVFVARDLDFSNVYKLKVIENKKQIVNRALSRNFYKNSAVICNEPKLAHIER</sequence>